<organism>
    <name type="scientific">Klebsiella pneumoniae (strain 342)</name>
    <dbReference type="NCBI Taxonomy" id="507522"/>
    <lineage>
        <taxon>Bacteria</taxon>
        <taxon>Pseudomonadati</taxon>
        <taxon>Pseudomonadota</taxon>
        <taxon>Gammaproteobacteria</taxon>
        <taxon>Enterobacterales</taxon>
        <taxon>Enterobacteriaceae</taxon>
        <taxon>Klebsiella/Raoultella group</taxon>
        <taxon>Klebsiella</taxon>
        <taxon>Klebsiella pneumoniae complex</taxon>
    </lineage>
</organism>
<proteinExistence type="inferred from homology"/>
<sequence length="673" mass="76093">MSKSFVLHSAFRPSGDQPEAIRRLEEGLEDGLAHQTLLGVTGSGKTFTIANVIADLQRPTMVLAPNKTLAAQLYGEMKEFFPENAVEYFVSYYDYYQPEAYVPSSDTFIEKDASVNEHIEQMRLSATKALLERRDVVVVASVSAIYGLGDPDLYLKMMLHLTVGMLIDQRAILRRLAELQYTRNDQAFQRGTFRVRGEVIDVFPAESDDIALRIELFDEEVERLSLFDPLTGHVESTVPRYTIYPKTHYVTPRERIVQAMEEIKLELAERRKVLLANNKLLEEQRLTQRTQFDLEMMNELGYCSGIENYSRFLSGRGPGEPPPTLFDYLPADGLLVIDESHVTVPQIGGMYRGDRARKETLVEYGFRLPSALDNRPMKFEEFEALAPQTIYVSATPGAYELDKSGGEVVDQVVRPTGLLDPIIEVRPVATQVDDLLSEIRLRTAINERVLVTTLTKRMAEDLTEYLEEHGERVRYLHSDIDTVERMEIIRDLRLGEFDVLVGINLLREGLDMPEVSLVAILDADKEGFLRSERSLIQTIGRAARNINGKAILYGDKITPSMAKAIGETERRREKQQRYNEEHGIVPQGLNKKVVDILQLGQGLAKTKAKGRGKAKAVEPAGLSAVEMTPKALQQKIHELEGQMMQHAQNLEFEEAAQIRDQLHQLRELFIAAS</sequence>
<dbReference type="EMBL" id="CP000964">
    <property type="protein sequence ID" value="ACI08296.1"/>
    <property type="molecule type" value="Genomic_DNA"/>
</dbReference>
<dbReference type="SMR" id="B5XYX2"/>
<dbReference type="KEGG" id="kpe:KPK_3768"/>
<dbReference type="HOGENOM" id="CLU_009621_2_1_6"/>
<dbReference type="Proteomes" id="UP000001734">
    <property type="component" value="Chromosome"/>
</dbReference>
<dbReference type="GO" id="GO:0005737">
    <property type="term" value="C:cytoplasm"/>
    <property type="evidence" value="ECO:0007669"/>
    <property type="project" value="UniProtKB-SubCell"/>
</dbReference>
<dbReference type="GO" id="GO:0009380">
    <property type="term" value="C:excinuclease repair complex"/>
    <property type="evidence" value="ECO:0007669"/>
    <property type="project" value="InterPro"/>
</dbReference>
<dbReference type="GO" id="GO:0005524">
    <property type="term" value="F:ATP binding"/>
    <property type="evidence" value="ECO:0007669"/>
    <property type="project" value="UniProtKB-UniRule"/>
</dbReference>
<dbReference type="GO" id="GO:0016887">
    <property type="term" value="F:ATP hydrolysis activity"/>
    <property type="evidence" value="ECO:0007669"/>
    <property type="project" value="InterPro"/>
</dbReference>
<dbReference type="GO" id="GO:0003677">
    <property type="term" value="F:DNA binding"/>
    <property type="evidence" value="ECO:0007669"/>
    <property type="project" value="UniProtKB-UniRule"/>
</dbReference>
<dbReference type="GO" id="GO:0009381">
    <property type="term" value="F:excinuclease ABC activity"/>
    <property type="evidence" value="ECO:0007669"/>
    <property type="project" value="UniProtKB-UniRule"/>
</dbReference>
<dbReference type="GO" id="GO:0004386">
    <property type="term" value="F:helicase activity"/>
    <property type="evidence" value="ECO:0007669"/>
    <property type="project" value="UniProtKB-KW"/>
</dbReference>
<dbReference type="GO" id="GO:0006289">
    <property type="term" value="P:nucleotide-excision repair"/>
    <property type="evidence" value="ECO:0007669"/>
    <property type="project" value="UniProtKB-UniRule"/>
</dbReference>
<dbReference type="GO" id="GO:0009432">
    <property type="term" value="P:SOS response"/>
    <property type="evidence" value="ECO:0007669"/>
    <property type="project" value="UniProtKB-UniRule"/>
</dbReference>
<dbReference type="CDD" id="cd17916">
    <property type="entry name" value="DEXHc_UvrB"/>
    <property type="match status" value="1"/>
</dbReference>
<dbReference type="CDD" id="cd18790">
    <property type="entry name" value="SF2_C_UvrB"/>
    <property type="match status" value="1"/>
</dbReference>
<dbReference type="FunFam" id="3.40.50.300:FF:000257">
    <property type="entry name" value="UvrABC system protein B"/>
    <property type="match status" value="1"/>
</dbReference>
<dbReference type="FunFam" id="3.40.50.300:FF:000401">
    <property type="entry name" value="UvrABC system protein B"/>
    <property type="match status" value="1"/>
</dbReference>
<dbReference type="FunFam" id="3.40.50.300:FF:000477">
    <property type="entry name" value="UvrABC system protein B"/>
    <property type="match status" value="1"/>
</dbReference>
<dbReference type="Gene3D" id="3.40.50.300">
    <property type="entry name" value="P-loop containing nucleotide triphosphate hydrolases"/>
    <property type="match status" value="3"/>
</dbReference>
<dbReference type="Gene3D" id="4.10.860.10">
    <property type="entry name" value="UVR domain"/>
    <property type="match status" value="1"/>
</dbReference>
<dbReference type="HAMAP" id="MF_00204">
    <property type="entry name" value="UvrB"/>
    <property type="match status" value="1"/>
</dbReference>
<dbReference type="InterPro" id="IPR006935">
    <property type="entry name" value="Helicase/UvrB_N"/>
</dbReference>
<dbReference type="InterPro" id="IPR014001">
    <property type="entry name" value="Helicase_ATP-bd"/>
</dbReference>
<dbReference type="InterPro" id="IPR001650">
    <property type="entry name" value="Helicase_C-like"/>
</dbReference>
<dbReference type="InterPro" id="IPR027417">
    <property type="entry name" value="P-loop_NTPase"/>
</dbReference>
<dbReference type="InterPro" id="IPR001943">
    <property type="entry name" value="UVR_dom"/>
</dbReference>
<dbReference type="InterPro" id="IPR036876">
    <property type="entry name" value="UVR_dom_sf"/>
</dbReference>
<dbReference type="InterPro" id="IPR004807">
    <property type="entry name" value="UvrB"/>
</dbReference>
<dbReference type="InterPro" id="IPR041471">
    <property type="entry name" value="UvrB_inter"/>
</dbReference>
<dbReference type="InterPro" id="IPR024759">
    <property type="entry name" value="UvrB_YAD/RRR_dom"/>
</dbReference>
<dbReference type="NCBIfam" id="NF003673">
    <property type="entry name" value="PRK05298.1"/>
    <property type="match status" value="1"/>
</dbReference>
<dbReference type="NCBIfam" id="TIGR00631">
    <property type="entry name" value="uvrb"/>
    <property type="match status" value="1"/>
</dbReference>
<dbReference type="PANTHER" id="PTHR24029">
    <property type="entry name" value="UVRABC SYSTEM PROTEIN B"/>
    <property type="match status" value="1"/>
</dbReference>
<dbReference type="PANTHER" id="PTHR24029:SF0">
    <property type="entry name" value="UVRABC SYSTEM PROTEIN B"/>
    <property type="match status" value="1"/>
</dbReference>
<dbReference type="Pfam" id="PF00271">
    <property type="entry name" value="Helicase_C"/>
    <property type="match status" value="1"/>
</dbReference>
<dbReference type="Pfam" id="PF04851">
    <property type="entry name" value="ResIII"/>
    <property type="match status" value="1"/>
</dbReference>
<dbReference type="Pfam" id="PF02151">
    <property type="entry name" value="UVR"/>
    <property type="match status" value="1"/>
</dbReference>
<dbReference type="Pfam" id="PF12344">
    <property type="entry name" value="UvrB"/>
    <property type="match status" value="1"/>
</dbReference>
<dbReference type="Pfam" id="PF17757">
    <property type="entry name" value="UvrB_inter"/>
    <property type="match status" value="1"/>
</dbReference>
<dbReference type="SMART" id="SM00487">
    <property type="entry name" value="DEXDc"/>
    <property type="match status" value="1"/>
</dbReference>
<dbReference type="SMART" id="SM00490">
    <property type="entry name" value="HELICc"/>
    <property type="match status" value="1"/>
</dbReference>
<dbReference type="SUPFAM" id="SSF46600">
    <property type="entry name" value="C-terminal UvrC-binding domain of UvrB"/>
    <property type="match status" value="1"/>
</dbReference>
<dbReference type="SUPFAM" id="SSF52540">
    <property type="entry name" value="P-loop containing nucleoside triphosphate hydrolases"/>
    <property type="match status" value="2"/>
</dbReference>
<dbReference type="PROSITE" id="PS51192">
    <property type="entry name" value="HELICASE_ATP_BIND_1"/>
    <property type="match status" value="1"/>
</dbReference>
<dbReference type="PROSITE" id="PS51194">
    <property type="entry name" value="HELICASE_CTER"/>
    <property type="match status" value="1"/>
</dbReference>
<dbReference type="PROSITE" id="PS50151">
    <property type="entry name" value="UVR"/>
    <property type="match status" value="1"/>
</dbReference>
<gene>
    <name evidence="1" type="primary">uvrB</name>
    <name type="ordered locus">KPK_3768</name>
</gene>
<name>UVRB_KLEP3</name>
<evidence type="ECO:0000255" key="1">
    <source>
        <dbReference type="HAMAP-Rule" id="MF_00204"/>
    </source>
</evidence>
<accession>B5XYX2</accession>
<protein>
    <recommendedName>
        <fullName evidence="1">UvrABC system protein B</fullName>
        <shortName evidence="1">Protein UvrB</shortName>
    </recommendedName>
    <alternativeName>
        <fullName evidence="1">Excinuclease ABC subunit B</fullName>
    </alternativeName>
</protein>
<reference key="1">
    <citation type="journal article" date="2008" name="PLoS Genet.">
        <title>Complete genome sequence of the N2-fixing broad host range endophyte Klebsiella pneumoniae 342 and virulence predictions verified in mice.</title>
        <authorList>
            <person name="Fouts D.E."/>
            <person name="Tyler H.L."/>
            <person name="DeBoy R.T."/>
            <person name="Daugherty S."/>
            <person name="Ren Q."/>
            <person name="Badger J.H."/>
            <person name="Durkin A.S."/>
            <person name="Huot H."/>
            <person name="Shrivastava S."/>
            <person name="Kothari S."/>
            <person name="Dodson R.J."/>
            <person name="Mohamoud Y."/>
            <person name="Khouri H."/>
            <person name="Roesch L.F.W."/>
            <person name="Krogfelt K.A."/>
            <person name="Struve C."/>
            <person name="Triplett E.W."/>
            <person name="Methe B.A."/>
        </authorList>
    </citation>
    <scope>NUCLEOTIDE SEQUENCE [LARGE SCALE GENOMIC DNA]</scope>
    <source>
        <strain>342</strain>
    </source>
</reference>
<feature type="chain" id="PRO_1000099554" description="UvrABC system protein B">
    <location>
        <begin position="1"/>
        <end position="673"/>
    </location>
</feature>
<feature type="domain" description="Helicase ATP-binding" evidence="1">
    <location>
        <begin position="26"/>
        <end position="183"/>
    </location>
</feature>
<feature type="domain" description="Helicase C-terminal" evidence="1">
    <location>
        <begin position="431"/>
        <end position="597"/>
    </location>
</feature>
<feature type="domain" description="UVR" evidence="1">
    <location>
        <begin position="633"/>
        <end position="668"/>
    </location>
</feature>
<feature type="short sequence motif" description="Beta-hairpin">
    <location>
        <begin position="92"/>
        <end position="115"/>
    </location>
</feature>
<feature type="binding site" evidence="1">
    <location>
        <begin position="39"/>
        <end position="46"/>
    </location>
    <ligand>
        <name>ATP</name>
        <dbReference type="ChEBI" id="CHEBI:30616"/>
    </ligand>
</feature>
<comment type="function">
    <text evidence="1">The UvrABC repair system catalyzes the recognition and processing of DNA lesions. A damage recognition complex composed of 2 UvrA and 2 UvrB subunits scans DNA for abnormalities. Upon binding of the UvrA(2)B(2) complex to a putative damaged site, the DNA wraps around one UvrB monomer. DNA wrap is dependent on ATP binding by UvrB and probably causes local melting of the DNA helix, facilitating insertion of UvrB beta-hairpin between the DNA strands. Then UvrB probes one DNA strand for the presence of a lesion. If a lesion is found the UvrA subunits dissociate and the UvrB-DNA preincision complex is formed. This complex is subsequently bound by UvrC and the second UvrB is released. If no lesion is found, the DNA wraps around the other UvrB subunit that will check the other stand for damage.</text>
</comment>
<comment type="subunit">
    <text evidence="1">Forms a heterotetramer with UvrA during the search for lesions. Interacts with UvrC in an incision complex.</text>
</comment>
<comment type="subcellular location">
    <subcellularLocation>
        <location evidence="1">Cytoplasm</location>
    </subcellularLocation>
</comment>
<comment type="domain">
    <text evidence="1">The beta-hairpin motif is involved in DNA binding.</text>
</comment>
<comment type="similarity">
    <text evidence="1">Belongs to the UvrB family.</text>
</comment>
<keyword id="KW-0067">ATP-binding</keyword>
<keyword id="KW-0963">Cytoplasm</keyword>
<keyword id="KW-0227">DNA damage</keyword>
<keyword id="KW-0228">DNA excision</keyword>
<keyword id="KW-0234">DNA repair</keyword>
<keyword id="KW-0267">Excision nuclease</keyword>
<keyword id="KW-0347">Helicase</keyword>
<keyword id="KW-0378">Hydrolase</keyword>
<keyword id="KW-0547">Nucleotide-binding</keyword>
<keyword id="KW-0742">SOS response</keyword>